<geneLocation type="chloroplast"/>
<evidence type="ECO:0000255" key="1">
    <source>
        <dbReference type="HAMAP-Rule" id="MF_01378"/>
    </source>
</evidence>
<evidence type="ECO:0000305" key="2"/>
<proteinExistence type="inferred from homology"/>
<sequence>MFKKSYQFFALVLFSIFNVLVTSASAIDLDEATRTVVADSNGNTTVLTPEQVKRGKRLFNNTCGACHVGGVTKTNPNVGLRPEGLSLATPRRDNAAALVDYLKNPTSYDGLESIAEIHPSIKSGDIYPRMRSLTDEDLFSIAGHILLQPKIVTEKWGGGKIYY</sequence>
<reference key="1">
    <citation type="journal article" date="1995" name="Plant Mol. Biol. Rep.">
        <title>The chloroplast genome of a chlorophyll a+c-containing alga, Odontella sinensis.</title>
        <authorList>
            <person name="Kowallik K.V."/>
            <person name="Stoebe B."/>
            <person name="Schaffran I."/>
            <person name="Kroth-Pancic P."/>
            <person name="Freier U."/>
        </authorList>
    </citation>
    <scope>NUCLEOTIDE SEQUENCE [LARGE SCALE GENOMIC DNA]</scope>
</reference>
<accession>P49510</accession>
<keyword id="KW-0150">Chloroplast</keyword>
<keyword id="KW-0249">Electron transport</keyword>
<keyword id="KW-0349">Heme</keyword>
<keyword id="KW-0408">Iron</keyword>
<keyword id="KW-0472">Membrane</keyword>
<keyword id="KW-0479">Metal-binding</keyword>
<keyword id="KW-0602">Photosynthesis</keyword>
<keyword id="KW-0604">Photosystem II</keyword>
<keyword id="KW-0934">Plastid</keyword>
<keyword id="KW-0732">Signal</keyword>
<keyword id="KW-0793">Thylakoid</keyword>
<keyword id="KW-0813">Transport</keyword>
<name>CY550_TRICV</name>
<gene>
    <name evidence="1" type="primary">psbV</name>
</gene>
<comment type="function">
    <text evidence="1">One of the extrinsic, lumenal subunits of photosystem II (PSII). PSII is a light-driven water plastoquinone oxidoreductase, using light energy to abstract electrons from H(2)O, generating a proton gradient subsequently used for ATP formation. The extrinsic proteins stabilize the structure of photosystem II oxygen-evolving complex (OEC), the ion environment of oxygen evolution and protect the OEC against heat-induced inactivation.</text>
</comment>
<comment type="cofactor">
    <cofactor evidence="1">
        <name>heme c</name>
        <dbReference type="ChEBI" id="CHEBI:61717"/>
    </cofactor>
    <text evidence="1">Binds 1 heme c group covalently per subunit.</text>
</comment>
<comment type="subunit">
    <text evidence="2">PSII is composed of 1 copy each of membrane proteins PsbA, PsbB, PsbC, PsbD, PsbE, PsbF, PsbH, PsbI, PsbJ, PsbK, PsbL, PsbM, PsbT, PsbY, PsbZ, Psb30/Ycf12, at least 3 peripheral proteins of the oxygen-evolving complex and a large number of cofactors. It forms dimeric complexes.</text>
</comment>
<comment type="subcellular location">
    <subcellularLocation>
        <location evidence="1">Plastid</location>
        <location evidence="1">Chloroplast thylakoid membrane</location>
        <topology evidence="1">Peripheral membrane protein</topology>
        <orientation evidence="1">Lumenal side</orientation>
    </subcellularLocation>
    <text evidence="1">Associated with photosystem II at the lumenal side of the thylakoid membrane.</text>
</comment>
<comment type="similarity">
    <text evidence="1">Belongs to the cytochrome c family. PsbV subfamily.</text>
</comment>
<protein>
    <recommendedName>
        <fullName evidence="1">Photosystem II extrinsic protein V</fullName>
        <shortName evidence="1">PsbV</shortName>
    </recommendedName>
    <alternativeName>
        <fullName evidence="1">Cytochrome c-550</fullName>
    </alternativeName>
    <alternativeName>
        <fullName evidence="1">Cytochrome c550</fullName>
    </alternativeName>
</protein>
<dbReference type="EMBL" id="Z67753">
    <property type="protein sequence ID" value="CAA91732.1"/>
    <property type="molecule type" value="Genomic_DNA"/>
</dbReference>
<dbReference type="PIR" id="S78359">
    <property type="entry name" value="S78359"/>
</dbReference>
<dbReference type="RefSeq" id="NP_043700.1">
    <property type="nucleotide sequence ID" value="NC_001713.1"/>
</dbReference>
<dbReference type="SMR" id="P49510"/>
<dbReference type="GeneID" id="801711"/>
<dbReference type="GO" id="GO:0009535">
    <property type="term" value="C:chloroplast thylakoid membrane"/>
    <property type="evidence" value="ECO:0007669"/>
    <property type="project" value="UniProtKB-SubCell"/>
</dbReference>
<dbReference type="GO" id="GO:0009523">
    <property type="term" value="C:photosystem II"/>
    <property type="evidence" value="ECO:0007669"/>
    <property type="project" value="UniProtKB-KW"/>
</dbReference>
<dbReference type="GO" id="GO:0009055">
    <property type="term" value="F:electron transfer activity"/>
    <property type="evidence" value="ECO:0007669"/>
    <property type="project" value="InterPro"/>
</dbReference>
<dbReference type="GO" id="GO:0020037">
    <property type="term" value="F:heme binding"/>
    <property type="evidence" value="ECO:0007669"/>
    <property type="project" value="InterPro"/>
</dbReference>
<dbReference type="GO" id="GO:0005506">
    <property type="term" value="F:iron ion binding"/>
    <property type="evidence" value="ECO:0007669"/>
    <property type="project" value="InterPro"/>
</dbReference>
<dbReference type="GO" id="GO:0019684">
    <property type="term" value="P:photosynthesis, light reaction"/>
    <property type="evidence" value="ECO:0007669"/>
    <property type="project" value="UniProtKB-UniRule"/>
</dbReference>
<dbReference type="GO" id="GO:0022904">
    <property type="term" value="P:respiratory electron transport chain"/>
    <property type="evidence" value="ECO:0007669"/>
    <property type="project" value="InterPro"/>
</dbReference>
<dbReference type="Gene3D" id="1.10.760.10">
    <property type="entry name" value="Cytochrome c-like domain"/>
    <property type="match status" value="1"/>
</dbReference>
<dbReference type="HAMAP" id="MF_01378">
    <property type="entry name" value="PSII_Cyt550"/>
    <property type="match status" value="1"/>
</dbReference>
<dbReference type="InterPro" id="IPR009056">
    <property type="entry name" value="Cyt_c-like_dom"/>
</dbReference>
<dbReference type="InterPro" id="IPR036909">
    <property type="entry name" value="Cyt_c-like_dom_sf"/>
</dbReference>
<dbReference type="InterPro" id="IPR029490">
    <property type="entry name" value="Cytochrom_C550"/>
</dbReference>
<dbReference type="InterPro" id="IPR017851">
    <property type="entry name" value="PsbV_cyt_c550"/>
</dbReference>
<dbReference type="InterPro" id="IPR016003">
    <property type="entry name" value="PsbV_cyt_c550-like"/>
</dbReference>
<dbReference type="NCBIfam" id="TIGR03045">
    <property type="entry name" value="PS_II_C550"/>
    <property type="match status" value="1"/>
</dbReference>
<dbReference type="Pfam" id="PF14495">
    <property type="entry name" value="Cytochrom_C550"/>
    <property type="match status" value="1"/>
</dbReference>
<dbReference type="PIRSF" id="PIRSF005890">
    <property type="entry name" value="Phot_II_cyt_c550"/>
    <property type="match status" value="1"/>
</dbReference>
<dbReference type="SUPFAM" id="SSF46626">
    <property type="entry name" value="Cytochrome c"/>
    <property type="match status" value="1"/>
</dbReference>
<dbReference type="PROSITE" id="PS51007">
    <property type="entry name" value="CYTC"/>
    <property type="match status" value="1"/>
</dbReference>
<feature type="signal peptide" evidence="1">
    <location>
        <begin position="1"/>
        <end position="26"/>
    </location>
</feature>
<feature type="chain" id="PRO_0000006516" description="Photosystem II extrinsic protein V">
    <location>
        <begin position="27"/>
        <end position="163"/>
    </location>
</feature>
<feature type="binding site" description="covalent" evidence="1">
    <location>
        <position position="63"/>
    </location>
    <ligand>
        <name>heme c</name>
        <dbReference type="ChEBI" id="CHEBI:61717"/>
    </ligand>
</feature>
<feature type="binding site" description="covalent" evidence="1">
    <location>
        <position position="66"/>
    </location>
    <ligand>
        <name>heme c</name>
        <dbReference type="ChEBI" id="CHEBI:61717"/>
    </ligand>
</feature>
<feature type="binding site" description="axial binding residue" evidence="1">
    <location>
        <position position="67"/>
    </location>
    <ligand>
        <name>heme c</name>
        <dbReference type="ChEBI" id="CHEBI:61717"/>
    </ligand>
    <ligandPart>
        <name>Fe</name>
        <dbReference type="ChEBI" id="CHEBI:18248"/>
    </ligandPart>
</feature>
<feature type="binding site" description="axial binding residue" evidence="1">
    <location>
        <position position="118"/>
    </location>
    <ligand>
        <name>heme c</name>
        <dbReference type="ChEBI" id="CHEBI:61717"/>
    </ligand>
    <ligandPart>
        <name>Fe</name>
        <dbReference type="ChEBI" id="CHEBI:18248"/>
    </ligandPart>
</feature>
<organism>
    <name type="scientific">Trieres chinensis</name>
    <name type="common">Marine centric diatom</name>
    <name type="synonym">Odontella sinensis</name>
    <dbReference type="NCBI Taxonomy" id="1514140"/>
    <lineage>
        <taxon>Eukaryota</taxon>
        <taxon>Sar</taxon>
        <taxon>Stramenopiles</taxon>
        <taxon>Ochrophyta</taxon>
        <taxon>Bacillariophyta</taxon>
        <taxon>Mediophyceae</taxon>
        <taxon>Biddulphiophycidae</taxon>
        <taxon>Eupodiscales</taxon>
        <taxon>Parodontellaceae</taxon>
        <taxon>Trieres</taxon>
    </lineage>
</organism>